<protein>
    <recommendedName>
        <fullName evidence="1">Putative pyruvate, phosphate dikinase regulatory protein</fullName>
        <shortName evidence="1">PPDK regulatory protein</shortName>
        <ecNumber evidence="1">2.7.11.32</ecNumber>
        <ecNumber evidence="1">2.7.4.27</ecNumber>
    </recommendedName>
</protein>
<proteinExistence type="inferred from homology"/>
<name>PDRP_LACGA</name>
<accession>Q042X7</accession>
<reference key="1">
    <citation type="journal article" date="2006" name="Proc. Natl. Acad. Sci. U.S.A.">
        <title>Comparative genomics of the lactic acid bacteria.</title>
        <authorList>
            <person name="Makarova K.S."/>
            <person name="Slesarev A."/>
            <person name="Wolf Y.I."/>
            <person name="Sorokin A."/>
            <person name="Mirkin B."/>
            <person name="Koonin E.V."/>
            <person name="Pavlov A."/>
            <person name="Pavlova N."/>
            <person name="Karamychev V."/>
            <person name="Polouchine N."/>
            <person name="Shakhova V."/>
            <person name="Grigoriev I."/>
            <person name="Lou Y."/>
            <person name="Rohksar D."/>
            <person name="Lucas S."/>
            <person name="Huang K."/>
            <person name="Goodstein D.M."/>
            <person name="Hawkins T."/>
            <person name="Plengvidhya V."/>
            <person name="Welker D."/>
            <person name="Hughes J."/>
            <person name="Goh Y."/>
            <person name="Benson A."/>
            <person name="Baldwin K."/>
            <person name="Lee J.-H."/>
            <person name="Diaz-Muniz I."/>
            <person name="Dosti B."/>
            <person name="Smeianov V."/>
            <person name="Wechter W."/>
            <person name="Barabote R."/>
            <person name="Lorca G."/>
            <person name="Altermann E."/>
            <person name="Barrangou R."/>
            <person name="Ganesan B."/>
            <person name="Xie Y."/>
            <person name="Rawsthorne H."/>
            <person name="Tamir D."/>
            <person name="Parker C."/>
            <person name="Breidt F."/>
            <person name="Broadbent J.R."/>
            <person name="Hutkins R."/>
            <person name="O'Sullivan D."/>
            <person name="Steele J."/>
            <person name="Unlu G."/>
            <person name="Saier M.H. Jr."/>
            <person name="Klaenhammer T."/>
            <person name="Richardson P."/>
            <person name="Kozyavkin S."/>
            <person name="Weimer B.C."/>
            <person name="Mills D.A."/>
        </authorList>
    </citation>
    <scope>NUCLEOTIDE SEQUENCE [LARGE SCALE GENOMIC DNA]</scope>
    <source>
        <strain>ATCC 33323 / DSM 20243 / BCRC 14619 / CIP 102991 / JCM 1131 / KCTC 3163 / NCIMB 11718 / NCTC 13722 / AM63</strain>
    </source>
</reference>
<sequence>MTEEKKENQKIVNLIIISDSVGDTAFNMVQAGAVQYPDVKFNYRRYPFITNREKLEKVFNEITEFENVLIAFTLIHEDEQLAAIKFAREHNMKYVDLLSGVIENIHSLTGEEPKHEIGAVHHMGQNYFDRISAMEFAVMYDDGKDPKGFLEADVVLLGVSRTSKTPLSLFLANKNLKVANLPLVPQTHIPDEIYKVDPKKIIGLTNDPSVLNEIRRQRMIAYGLNPDTTYSNMDSINAELDAANKLYKKLGCYVINVAHRSIEETAALIMEHLGIDDYAK</sequence>
<keyword id="KW-0418">Kinase</keyword>
<keyword id="KW-0547">Nucleotide-binding</keyword>
<keyword id="KW-0723">Serine/threonine-protein kinase</keyword>
<keyword id="KW-0808">Transferase</keyword>
<gene>
    <name type="ordered locus">LGAS_1123</name>
</gene>
<comment type="function">
    <text evidence="1">Bifunctional serine/threonine kinase and phosphorylase involved in the regulation of the pyruvate, phosphate dikinase (PPDK) by catalyzing its phosphorylation/dephosphorylation.</text>
</comment>
<comment type="catalytic activity">
    <reaction evidence="1">
        <text>N(tele)-phospho-L-histidyl/L-threonyl-[pyruvate, phosphate dikinase] + ADP = N(tele)-phospho-L-histidyl/O-phospho-L-threonyl-[pyruvate, phosphate dikinase] + AMP + H(+)</text>
        <dbReference type="Rhea" id="RHEA:43692"/>
        <dbReference type="Rhea" id="RHEA-COMP:10650"/>
        <dbReference type="Rhea" id="RHEA-COMP:10651"/>
        <dbReference type="ChEBI" id="CHEBI:15378"/>
        <dbReference type="ChEBI" id="CHEBI:30013"/>
        <dbReference type="ChEBI" id="CHEBI:61977"/>
        <dbReference type="ChEBI" id="CHEBI:83586"/>
        <dbReference type="ChEBI" id="CHEBI:456215"/>
        <dbReference type="ChEBI" id="CHEBI:456216"/>
        <dbReference type="EC" id="2.7.11.32"/>
    </reaction>
</comment>
<comment type="catalytic activity">
    <reaction evidence="1">
        <text>N(tele)-phospho-L-histidyl/O-phospho-L-threonyl-[pyruvate, phosphate dikinase] + phosphate + H(+) = N(tele)-phospho-L-histidyl/L-threonyl-[pyruvate, phosphate dikinase] + diphosphate</text>
        <dbReference type="Rhea" id="RHEA:43696"/>
        <dbReference type="Rhea" id="RHEA-COMP:10650"/>
        <dbReference type="Rhea" id="RHEA-COMP:10651"/>
        <dbReference type="ChEBI" id="CHEBI:15378"/>
        <dbReference type="ChEBI" id="CHEBI:30013"/>
        <dbReference type="ChEBI" id="CHEBI:33019"/>
        <dbReference type="ChEBI" id="CHEBI:43474"/>
        <dbReference type="ChEBI" id="CHEBI:61977"/>
        <dbReference type="ChEBI" id="CHEBI:83586"/>
        <dbReference type="EC" id="2.7.4.27"/>
    </reaction>
</comment>
<comment type="similarity">
    <text evidence="1">Belongs to the pyruvate, phosphate/water dikinase regulatory protein family. PDRP subfamily.</text>
</comment>
<comment type="sequence caution" evidence="2">
    <conflict type="erroneous initiation">
        <sequence resource="EMBL-CDS" id="ABJ60495"/>
    </conflict>
</comment>
<dbReference type="EC" id="2.7.11.32" evidence="1"/>
<dbReference type="EC" id="2.7.4.27" evidence="1"/>
<dbReference type="EMBL" id="CP000413">
    <property type="protein sequence ID" value="ABJ60495.1"/>
    <property type="status" value="ALT_INIT"/>
    <property type="molecule type" value="Genomic_DNA"/>
</dbReference>
<dbReference type="RefSeq" id="WP_003647179.1">
    <property type="nucleotide sequence ID" value="NZ_WBMG01000002.1"/>
</dbReference>
<dbReference type="SMR" id="Q042X7"/>
<dbReference type="GeneID" id="29638611"/>
<dbReference type="KEGG" id="lga:LGAS_1123"/>
<dbReference type="HOGENOM" id="CLU_046206_2_1_9"/>
<dbReference type="BioCyc" id="LGAS324831:G1G6Y-1120-MONOMER"/>
<dbReference type="Proteomes" id="UP000000664">
    <property type="component" value="Chromosome"/>
</dbReference>
<dbReference type="GO" id="GO:0043531">
    <property type="term" value="F:ADP binding"/>
    <property type="evidence" value="ECO:0007669"/>
    <property type="project" value="UniProtKB-UniRule"/>
</dbReference>
<dbReference type="GO" id="GO:0005524">
    <property type="term" value="F:ATP binding"/>
    <property type="evidence" value="ECO:0007669"/>
    <property type="project" value="InterPro"/>
</dbReference>
<dbReference type="GO" id="GO:0016776">
    <property type="term" value="F:phosphotransferase activity, phosphate group as acceptor"/>
    <property type="evidence" value="ECO:0007669"/>
    <property type="project" value="UniProtKB-UniRule"/>
</dbReference>
<dbReference type="GO" id="GO:0004674">
    <property type="term" value="F:protein serine/threonine kinase activity"/>
    <property type="evidence" value="ECO:0007669"/>
    <property type="project" value="UniProtKB-UniRule"/>
</dbReference>
<dbReference type="HAMAP" id="MF_00921">
    <property type="entry name" value="PDRP"/>
    <property type="match status" value="1"/>
</dbReference>
<dbReference type="InterPro" id="IPR005177">
    <property type="entry name" value="Kinase-pyrophosphorylase"/>
</dbReference>
<dbReference type="InterPro" id="IPR027417">
    <property type="entry name" value="P-loop_NTPase"/>
</dbReference>
<dbReference type="InterPro" id="IPR026565">
    <property type="entry name" value="PPDK_reg"/>
</dbReference>
<dbReference type="NCBIfam" id="NF003742">
    <property type="entry name" value="PRK05339.1"/>
    <property type="match status" value="1"/>
</dbReference>
<dbReference type="PANTHER" id="PTHR31756">
    <property type="entry name" value="PYRUVATE, PHOSPHATE DIKINASE REGULATORY PROTEIN 1, CHLOROPLASTIC"/>
    <property type="match status" value="1"/>
</dbReference>
<dbReference type="PANTHER" id="PTHR31756:SF3">
    <property type="entry name" value="PYRUVATE, PHOSPHATE DIKINASE REGULATORY PROTEIN 1, CHLOROPLASTIC"/>
    <property type="match status" value="1"/>
</dbReference>
<dbReference type="Pfam" id="PF03618">
    <property type="entry name" value="Kinase-PPPase"/>
    <property type="match status" value="1"/>
</dbReference>
<dbReference type="SUPFAM" id="SSF52540">
    <property type="entry name" value="P-loop containing nucleoside triphosphate hydrolases"/>
    <property type="match status" value="1"/>
</dbReference>
<evidence type="ECO:0000255" key="1">
    <source>
        <dbReference type="HAMAP-Rule" id="MF_00921"/>
    </source>
</evidence>
<evidence type="ECO:0000305" key="2"/>
<feature type="chain" id="PRO_0000316689" description="Putative pyruvate, phosphate dikinase regulatory protein">
    <location>
        <begin position="1"/>
        <end position="280"/>
    </location>
</feature>
<feature type="binding site" evidence="1">
    <location>
        <begin position="158"/>
        <end position="165"/>
    </location>
    <ligand>
        <name>ADP</name>
        <dbReference type="ChEBI" id="CHEBI:456216"/>
    </ligand>
</feature>
<organism>
    <name type="scientific">Lactobacillus gasseri (strain ATCC 33323 / DSM 20243 / BCRC 14619 / CIP 102991 / JCM 1131 / KCTC 3163 / NCIMB 11718 / NCTC 13722 / AM63)</name>
    <dbReference type="NCBI Taxonomy" id="324831"/>
    <lineage>
        <taxon>Bacteria</taxon>
        <taxon>Bacillati</taxon>
        <taxon>Bacillota</taxon>
        <taxon>Bacilli</taxon>
        <taxon>Lactobacillales</taxon>
        <taxon>Lactobacillaceae</taxon>
        <taxon>Lactobacillus</taxon>
    </lineage>
</organism>